<protein>
    <recommendedName>
        <fullName evidence="4">Lycopene beta cyclase, chloroplastic/chromoplastic</fullName>
        <ecNumber evidence="3">5.5.1.19</ecNumber>
    </recommendedName>
</protein>
<dbReference type="EC" id="5.5.1.19" evidence="3"/>
<dbReference type="EMBL" id="X86221">
    <property type="protein sequence ID" value="CAA60119.1"/>
    <property type="molecule type" value="mRNA"/>
</dbReference>
<dbReference type="EMBL" id="GU085266">
    <property type="protein sequence ID" value="ADH04271.1"/>
    <property type="molecule type" value="Genomic_DNA"/>
</dbReference>
<dbReference type="EMBL" id="GU085267">
    <property type="protein sequence ID" value="ADH04272.1"/>
    <property type="molecule type" value="Genomic_DNA"/>
</dbReference>
<dbReference type="EMBL" id="GU085268">
    <property type="protein sequence ID" value="ADH04273.1"/>
    <property type="molecule type" value="Genomic_DNA"/>
</dbReference>
<dbReference type="EMBL" id="GU085269">
    <property type="protein sequence ID" value="ADH04274.1"/>
    <property type="molecule type" value="Genomic_DNA"/>
</dbReference>
<dbReference type="EMBL" id="GU085270">
    <property type="protein sequence ID" value="ADH04275.1"/>
    <property type="molecule type" value="Genomic_DNA"/>
</dbReference>
<dbReference type="EMBL" id="GU085271">
    <property type="protein sequence ID" value="ADH04276.1"/>
    <property type="molecule type" value="Genomic_DNA"/>
</dbReference>
<dbReference type="EMBL" id="GU085272">
    <property type="protein sequence ID" value="ADH04277.1"/>
    <property type="molecule type" value="Genomic_DNA"/>
</dbReference>
<dbReference type="EMBL" id="AYRZ02000005">
    <property type="protein sequence ID" value="PHT80580.1"/>
    <property type="molecule type" value="Genomic_DNA"/>
</dbReference>
<dbReference type="RefSeq" id="NP_001311908.1">
    <property type="nucleotide sequence ID" value="NM_001324979.1"/>
</dbReference>
<dbReference type="RefSeq" id="XP_016571835.1">
    <property type="nucleotide sequence ID" value="XM_016716349.1"/>
</dbReference>
<dbReference type="RefSeq" id="XP_016571836.1">
    <property type="nucleotide sequence ID" value="XM_016716350.1"/>
</dbReference>
<dbReference type="SMR" id="Q43415"/>
<dbReference type="STRING" id="4072.D7P7Y0"/>
<dbReference type="SwissLipids" id="SLP:000001511"/>
<dbReference type="EnsemblPlants" id="PHT80580">
    <property type="protein sequence ID" value="PHT80580"/>
    <property type="gene ID" value="T459_13595"/>
</dbReference>
<dbReference type="GeneID" id="107869983"/>
<dbReference type="Gramene" id="PHT80580">
    <property type="protein sequence ID" value="PHT80580"/>
    <property type="gene ID" value="T459_13595"/>
</dbReference>
<dbReference type="KEGG" id="ag:CAA60119"/>
<dbReference type="KEGG" id="cann:107869983"/>
<dbReference type="OMA" id="FVLMDFR"/>
<dbReference type="OrthoDB" id="1716816at2759"/>
<dbReference type="BRENDA" id="5.5.1.19">
    <property type="organism ID" value="1169"/>
</dbReference>
<dbReference type="UniPathway" id="UPA00802"/>
<dbReference type="UniPathway" id="UPA00805"/>
<dbReference type="Proteomes" id="UP000222542">
    <property type="component" value="Chromosome 5"/>
</dbReference>
<dbReference type="GO" id="GO:0009507">
    <property type="term" value="C:chloroplast"/>
    <property type="evidence" value="ECO:0007669"/>
    <property type="project" value="UniProtKB-SubCell"/>
</dbReference>
<dbReference type="GO" id="GO:0009509">
    <property type="term" value="C:chromoplast"/>
    <property type="evidence" value="ECO:0000314"/>
    <property type="project" value="UniProtKB"/>
</dbReference>
<dbReference type="GO" id="GO:0005739">
    <property type="term" value="C:mitochondrion"/>
    <property type="evidence" value="ECO:0000318"/>
    <property type="project" value="GO_Central"/>
</dbReference>
<dbReference type="GO" id="GO:0045436">
    <property type="term" value="F:lycopene beta cyclase activity"/>
    <property type="evidence" value="ECO:0000314"/>
    <property type="project" value="UniProtKB"/>
</dbReference>
<dbReference type="GO" id="GO:0016491">
    <property type="term" value="F:oxidoreductase activity"/>
    <property type="evidence" value="ECO:0000318"/>
    <property type="project" value="GO_Central"/>
</dbReference>
<dbReference type="GO" id="GO:0016705">
    <property type="term" value="F:oxidoreductase activity, acting on paired donors, with incorporation or reduction of molecular oxygen"/>
    <property type="evidence" value="ECO:0007669"/>
    <property type="project" value="InterPro"/>
</dbReference>
<dbReference type="GO" id="GO:1901812">
    <property type="term" value="P:beta-carotene biosynthetic process"/>
    <property type="evidence" value="ECO:0000314"/>
    <property type="project" value="UniProtKB"/>
</dbReference>
<dbReference type="GO" id="GO:1901818">
    <property type="term" value="P:beta-zeacarotene biosynthetic process"/>
    <property type="evidence" value="ECO:0000314"/>
    <property type="project" value="UniProtKB"/>
</dbReference>
<dbReference type="GO" id="GO:0016120">
    <property type="term" value="P:carotene biosynthetic process"/>
    <property type="evidence" value="ECO:0000318"/>
    <property type="project" value="GO_Central"/>
</dbReference>
<dbReference type="GO" id="GO:0006744">
    <property type="term" value="P:ubiquinone biosynthetic process"/>
    <property type="evidence" value="ECO:0000318"/>
    <property type="project" value="GO_Central"/>
</dbReference>
<dbReference type="GO" id="GO:0016123">
    <property type="term" value="P:xanthophyll biosynthetic process"/>
    <property type="evidence" value="ECO:0000318"/>
    <property type="project" value="GO_Central"/>
</dbReference>
<dbReference type="FunFam" id="3.50.50.60:FF:000101">
    <property type="entry name" value="lycopene epsilon cyclase, chloroplastic"/>
    <property type="match status" value="1"/>
</dbReference>
<dbReference type="Gene3D" id="3.50.50.60">
    <property type="entry name" value="FAD/NAD(P)-binding domain"/>
    <property type="match status" value="1"/>
</dbReference>
<dbReference type="InterPro" id="IPR036188">
    <property type="entry name" value="FAD/NAD-bd_sf"/>
</dbReference>
<dbReference type="InterPro" id="IPR010108">
    <property type="entry name" value="Lycopene_cyclase_b/e"/>
</dbReference>
<dbReference type="NCBIfam" id="TIGR01790">
    <property type="entry name" value="carotene-cycl"/>
    <property type="match status" value="1"/>
</dbReference>
<dbReference type="PANTHER" id="PTHR39757">
    <property type="match status" value="1"/>
</dbReference>
<dbReference type="PANTHER" id="PTHR39757:SF5">
    <property type="entry name" value="OS02G0190600 PROTEIN"/>
    <property type="match status" value="1"/>
</dbReference>
<dbReference type="Pfam" id="PF05834">
    <property type="entry name" value="Lycopene_cycl"/>
    <property type="match status" value="1"/>
</dbReference>
<dbReference type="PRINTS" id="PR00411">
    <property type="entry name" value="PNDRDTASEI"/>
</dbReference>
<dbReference type="SUPFAM" id="SSF51905">
    <property type="entry name" value="FAD/NAD(P)-binding domain"/>
    <property type="match status" value="1"/>
</dbReference>
<accession>Q43415</accession>
<accession>A0A1U8GKZ7</accession>
<accession>D7P7Y0</accession>
<sequence length="498" mass="55626">MDTLLRTPNNLEFLHGFGVKVSAFSSVKSQKFGAKKFCEGLGSRSVCVKASSSALLELVPETKKENLDFELPMYDPSKGVVVDLAVVGGGPAGLAVAQQVSEAGLSVCSIDPNPKLIWPNNYGVWVDEFEAMDLLDCLDATWSGATVYIDDNTTKDLNRPYGRVNRKQLKSKMMQKCILNGVKFHQAKVIKVIHEESKSMLICNDGITIQATVVLDATGFSRSLVQYDKPYNPGYQVAYGILAEVEEHPFDVNKMVFMDWRDSHLKNNVELKERNSRIPTFLYAMPFSSNRIFLEETSLVARPGLGMDDIQERMVARLSHLGIKVKSIEEDEHCVIPMGGPLPVLPQRVVGIGGTAGMVHPSTGYMVARTLAAAPVVANAIIQYLSSERSHSGDELSAAVWKDLWPIERRRQREFFCFGMDILLKLDLPATRRFFDAFFDLEPRYWHGFLSSRLFLPELIVFGLSLFSHASNTSRLEIMTKGTLPLVHMINNLLQDKE</sequence>
<feature type="transit peptide" description="Chloroplast and chromoplast" evidence="1">
    <location>
        <begin position="1"/>
        <end position="79"/>
    </location>
</feature>
<feature type="chain" id="PRO_0000018430" description="Lycopene beta cyclase, chloroplastic/chromoplastic">
    <location>
        <begin position="80"/>
        <end position="498"/>
    </location>
</feature>
<feature type="short sequence motif" description="FLEET motif" evidence="6">
    <location>
        <begin position="293"/>
        <end position="297"/>
    </location>
</feature>
<feature type="binding site" evidence="1">
    <location>
        <begin position="84"/>
        <end position="112"/>
    </location>
    <ligand>
        <name>NAD(+)</name>
        <dbReference type="ChEBI" id="CHEBI:57540"/>
    </ligand>
</feature>
<feature type="mutagenesis site" description="Reduces catalytic activity 2-fold." evidence="2">
    <original>D</original>
    <variation>A</variation>
    <location>
        <position position="127"/>
    </location>
</feature>
<feature type="mutagenesis site" description="Reduces catalytic activity 20-fold." evidence="2">
    <original>E</original>
    <variation>A</variation>
    <location>
        <position position="128"/>
    </location>
</feature>
<feature type="mutagenesis site" description="Reduces catalytic activity 4-fold." evidence="2">
    <original>D</original>
    <variation>A</variation>
    <location>
        <position position="259"/>
    </location>
</feature>
<feature type="mutagenesis site" description="Abolishes catalytic activity." evidence="2">
    <original>E</original>
    <variation>A</variation>
    <variation>K</variation>
    <variation>R</variation>
    <location>
        <position position="295"/>
    </location>
</feature>
<feature type="mutagenesis site" description="Almost abolishes catalytic activity." evidence="2">
    <original>E</original>
    <variation>A</variation>
    <variation>K</variation>
    <variation>R</variation>
    <location>
        <position position="296"/>
    </location>
</feature>
<feature type="mutagenesis site" description="Reduces catalytic activity 20-fold." evidence="2">
    <original>E</original>
    <variation>A</variation>
    <location>
        <position position="332"/>
    </location>
</feature>
<feature type="mutagenesis site" description="Abolishes catalytic activity." evidence="2">
    <original>H</original>
    <variation>A</variation>
    <location>
        <position position="360"/>
    </location>
</feature>
<feature type="mutagenesis site" description="Reduces catalytic activity 7-fold." evidence="2">
    <original>H</original>
    <variation>K</variation>
    <location>
        <position position="360"/>
    </location>
</feature>
<feature type="mutagenesis site" description="Reduces catalytic activity 5-fold." evidence="2">
    <original>H</original>
    <variation>R</variation>
    <location>
        <position position="360"/>
    </location>
</feature>
<feature type="sequence conflict" description="In Ref. 1; CAA60119." evidence="5" ref="1">
    <original>T</original>
    <variation>A</variation>
    <location>
        <position position="146"/>
    </location>
</feature>
<feature type="sequence conflict" description="In Ref. 1; CAA60119." evidence="5" ref="1">
    <original>N</original>
    <variation>K</variation>
    <location>
        <position position="152"/>
    </location>
</feature>
<organism>
    <name type="scientific">Capsicum annuum</name>
    <name type="common">Capsicum pepper</name>
    <dbReference type="NCBI Taxonomy" id="4072"/>
    <lineage>
        <taxon>Eukaryota</taxon>
        <taxon>Viridiplantae</taxon>
        <taxon>Streptophyta</taxon>
        <taxon>Embryophyta</taxon>
        <taxon>Tracheophyta</taxon>
        <taxon>Spermatophyta</taxon>
        <taxon>Magnoliopsida</taxon>
        <taxon>eudicotyledons</taxon>
        <taxon>Gunneridae</taxon>
        <taxon>Pentapetalae</taxon>
        <taxon>asterids</taxon>
        <taxon>lamiids</taxon>
        <taxon>Solanales</taxon>
        <taxon>Solanaceae</taxon>
        <taxon>Solanoideae</taxon>
        <taxon>Capsiceae</taxon>
        <taxon>Capsicum</taxon>
    </lineage>
</organism>
<evidence type="ECO:0000255" key="1"/>
<evidence type="ECO:0000269" key="2">
    <source>
    </source>
</evidence>
<evidence type="ECO:0000269" key="3">
    <source>
    </source>
</evidence>
<evidence type="ECO:0000303" key="4">
    <source>
    </source>
</evidence>
<evidence type="ECO:0000305" key="5"/>
<evidence type="ECO:0000305" key="6">
    <source>
    </source>
</evidence>
<evidence type="ECO:0000305" key="7">
    <source>
    </source>
</evidence>
<evidence type="ECO:0000312" key="8">
    <source>
        <dbReference type="EMBL" id="PHT80580.1"/>
    </source>
</evidence>
<reference key="1">
    <citation type="journal article" date="1995" name="Plant J.">
        <title>Metabolism of cyclic carotenoids: a model for the alteration of this biosynthetic pathway in Capsicum annuum chromoplasts.</title>
        <authorList>
            <person name="Hugueney P."/>
            <person name="Badillo A."/>
            <person name="Chen H.C."/>
            <person name="Klein A."/>
            <person name="Hirschberg J."/>
            <person name="Camara B."/>
            <person name="Kuntz M."/>
        </authorList>
    </citation>
    <scope>NUCLEOTIDE SEQUENCE [MRNA]</scope>
    <scope>FUNCTION</scope>
    <scope>CATALYTIC ACTIVITY</scope>
    <scope>SUBCELLULAR LOCATION</scope>
    <source>
        <strain>cv. Lamuyo</strain>
        <tissue>Fruit</tissue>
    </source>
</reference>
<reference key="2">
    <citation type="journal article" date="2010" name="Plant Sci.">
        <title>Variability of carotenoid biosynthesis in orange colored Capsicum spp.</title>
        <authorList>
            <person name="Guzman I."/>
            <person name="Hamby S."/>
            <person name="Romero J."/>
            <person name="Bosland P.W."/>
            <person name="O'Connell M.A."/>
        </authorList>
    </citation>
    <scope>NUCLEOTIDE SEQUENCE [GENOMIC DNA]</scope>
    <source>
        <tissue>Pericarp</tissue>
    </source>
</reference>
<reference key="3">
    <citation type="journal article" date="2014" name="Nat. Genet.">
        <title>Genome sequence of the hot pepper provides insights into the evolution of pungency in Capsicum species.</title>
        <authorList>
            <person name="Kim S."/>
            <person name="Park M."/>
            <person name="Yeom S.I."/>
            <person name="Kim Y.M."/>
            <person name="Lee J.M."/>
            <person name="Lee H.A."/>
            <person name="Seo E."/>
            <person name="Choi J."/>
            <person name="Cheong K."/>
            <person name="Kim K.T."/>
            <person name="Jung K."/>
            <person name="Lee G.W."/>
            <person name="Oh S.K."/>
            <person name="Bae C."/>
            <person name="Kim S.B."/>
            <person name="Lee H.Y."/>
            <person name="Kim S.Y."/>
            <person name="Kim M.S."/>
            <person name="Kang B.C."/>
            <person name="Jo Y.D."/>
            <person name="Yang H.B."/>
            <person name="Jeong H.J."/>
            <person name="Kang W.H."/>
            <person name="Kwon J.K."/>
            <person name="Shin C."/>
            <person name="Lim J.Y."/>
            <person name="Park J.H."/>
            <person name="Huh J.H."/>
            <person name="Kim J.S."/>
            <person name="Kim B.D."/>
            <person name="Cohen O."/>
            <person name="Paran I."/>
            <person name="Suh M.C."/>
            <person name="Lee S.B."/>
            <person name="Kim Y.K."/>
            <person name="Shin Y."/>
            <person name="Noh S.J."/>
            <person name="Park J."/>
            <person name="Seo Y.S."/>
            <person name="Kwon S.Y."/>
            <person name="Kim H.A."/>
            <person name="Park J.M."/>
            <person name="Kim H.J."/>
            <person name="Choi S.B."/>
            <person name="Bosland P.W."/>
            <person name="Reeves G."/>
            <person name="Jo S.H."/>
            <person name="Lee B.W."/>
            <person name="Cho H.T."/>
            <person name="Choi H.S."/>
            <person name="Lee M.S."/>
            <person name="Yu Y."/>
            <person name="Do Choi Y."/>
            <person name="Park B.S."/>
            <person name="van Deynze A."/>
            <person name="Ashrafi H."/>
            <person name="Hill T."/>
            <person name="Kim W.T."/>
            <person name="Pai H.S."/>
            <person name="Ahn H.K."/>
            <person name="Yeam I."/>
            <person name="Giovannoni J.J."/>
            <person name="Rose J.K."/>
            <person name="Soerensen I."/>
            <person name="Lee S.J."/>
            <person name="Kim R.W."/>
            <person name="Choi I.Y."/>
            <person name="Choi B.S."/>
            <person name="Lim J.S."/>
            <person name="Lee Y.H."/>
            <person name="Choi D."/>
        </authorList>
    </citation>
    <scope>NUCLEOTIDE SEQUENCE [LARGE SCALE GENOMIC DNA]</scope>
</reference>
<reference key="4">
    <citation type="journal article" date="2014" name="Proc. Natl. Acad. Sci. U.S.A.">
        <title>Whole-genome sequencing of cultivated and wild peppers provides insights into Capsicum domestication and specialization.</title>
        <authorList>
            <person name="Qin C."/>
            <person name="Yu C."/>
            <person name="Shen Y."/>
            <person name="Fang X."/>
            <person name="Chen L."/>
            <person name="Min J."/>
            <person name="Cheng J."/>
            <person name="Zhao S."/>
            <person name="Xu M."/>
            <person name="Luo Y."/>
            <person name="Yang Y."/>
            <person name="Wu Z."/>
            <person name="Mao L."/>
            <person name="Wu H."/>
            <person name="Ling-Hu C."/>
            <person name="Zhou H."/>
            <person name="Lin H."/>
            <person name="Gonzalez-Morales S."/>
            <person name="Trejo-Saavedra D.L."/>
            <person name="Tian H."/>
            <person name="Tang X."/>
            <person name="Zhao M."/>
            <person name="Huang Z."/>
            <person name="Zhou A."/>
            <person name="Yao X."/>
            <person name="Cui J."/>
            <person name="Li W."/>
            <person name="Chen Z."/>
            <person name="Feng Y."/>
            <person name="Niu Y."/>
            <person name="Bi S."/>
            <person name="Yang X."/>
            <person name="Li W."/>
            <person name="Cai H."/>
            <person name="Luo X."/>
            <person name="Montes-Hernandez S."/>
            <person name="Leyva-Gonzalez M.A."/>
            <person name="Xiong Z."/>
            <person name="He X."/>
            <person name="Bai L."/>
            <person name="Tan S."/>
            <person name="Tang X."/>
            <person name="Liu D."/>
            <person name="Liu J."/>
            <person name="Zhang S."/>
            <person name="Chen M."/>
            <person name="Zhang L."/>
            <person name="Zhang L."/>
            <person name="Zhang Y."/>
            <person name="Liao W."/>
            <person name="Zhang Y."/>
            <person name="Wang M."/>
            <person name="Lv X."/>
            <person name="Wen B."/>
            <person name="Liu H."/>
            <person name="Luan H."/>
            <person name="Zhang Y."/>
            <person name="Yang S."/>
            <person name="Wang X."/>
            <person name="Xu J."/>
            <person name="Li X."/>
            <person name="Li S."/>
            <person name="Wang J."/>
            <person name="Palloix A."/>
            <person name="Bosland P.W."/>
            <person name="Li Y."/>
            <person name="Krogh A."/>
            <person name="Rivera-Bustamante R.F."/>
            <person name="Herrera-Estrella L."/>
            <person name="Yin Y."/>
            <person name="Yu J."/>
            <person name="Hu K."/>
            <person name="Zhang Z."/>
        </authorList>
    </citation>
    <scope>NUCLEOTIDE SEQUENCE [LARGE SCALE GENOMIC DNA]</scope>
    <source>
        <strain>cv. Zunla-1</strain>
    </source>
</reference>
<reference key="5">
    <citation type="journal article" date="2017" name="Genome Biol.">
        <title>New reference genome sequences of hot pepper reveal the massive evolution of plant disease-resistance genes by retroduplication.</title>
        <authorList>
            <person name="Kim S."/>
            <person name="Park J."/>
            <person name="Yeom S.I."/>
            <person name="Kim Y.M."/>
            <person name="Seo E."/>
            <person name="Kim K.T."/>
            <person name="Kim M.S."/>
            <person name="Lee J.M."/>
            <person name="Cheong K."/>
            <person name="Shin H.S."/>
            <person name="Kim S.B."/>
            <person name="Han K."/>
            <person name="Lee J."/>
            <person name="Park M."/>
            <person name="Lee H.A."/>
            <person name="Lee H.Y."/>
            <person name="Lee Y."/>
            <person name="Oh S."/>
            <person name="Lee J.H."/>
            <person name="Choi E."/>
            <person name="Choi E."/>
            <person name="Lee S.E."/>
            <person name="Jeon J."/>
            <person name="Kim H."/>
            <person name="Choi G."/>
            <person name="Song H."/>
            <person name="Lee J."/>
            <person name="Lee S.C."/>
            <person name="Kwon J.K."/>
            <person name="Lee H.Y."/>
            <person name="Koo N."/>
            <person name="Hong Y."/>
            <person name="Kim R.W."/>
            <person name="Kang W.H."/>
            <person name="Huh J.H."/>
            <person name="Kang B.C."/>
            <person name="Yang T.J."/>
            <person name="Lee Y.H."/>
            <person name="Bennetzen J.L."/>
            <person name="Choi D."/>
        </authorList>
    </citation>
    <scope>NUCLEOTIDE SEQUENCE [LARGE SCALE GENOMIC DNA]</scope>
    <source>
        <strain>cv. CM334</strain>
    </source>
</reference>
<reference key="6">
    <citation type="journal article" date="2010" name="Plant Physiol.">
        <title>Characterization of plant carotenoid cyclases as members of the flavoprotein family functioning with no net redox change.</title>
        <authorList>
            <person name="Mialoundama A.S."/>
            <person name="Heintz D."/>
            <person name="Jadid N."/>
            <person name="Nkeng P."/>
            <person name="Rahier A."/>
            <person name="Deli J."/>
            <person name="Camara B."/>
            <person name="Bouvier F."/>
        </authorList>
    </citation>
    <scope>FUNCTION</scope>
    <scope>CATALYTIC ACTIVITY</scope>
    <scope>COFACTOR</scope>
    <scope>BIOPHYSICOCHEMICAL PROPERTIES</scope>
    <scope>SUBUNIT</scope>
    <scope>MUTAGENESIS OF ASP-127; GLU-128; ASP-259; GLU-295; GLU-296; GLU-332 AND HIS-360</scope>
</reference>
<keyword id="KW-0125">Carotenoid biosynthesis</keyword>
<keyword id="KW-0150">Chloroplast</keyword>
<keyword id="KW-0957">Chromoplast</keyword>
<keyword id="KW-0285">Flavoprotein</keyword>
<keyword id="KW-0413">Isomerase</keyword>
<keyword id="KW-0520">NAD</keyword>
<keyword id="KW-0934">Plastid</keyword>
<keyword id="KW-1185">Reference proteome</keyword>
<keyword id="KW-0809">Transit peptide</keyword>
<name>LCYB_CAPAN</name>
<proteinExistence type="evidence at protein level"/>
<comment type="function">
    <text evidence="2 3">Catalyzes the double cyclization reaction which converts lycopene to beta-carotene (PubMed:20460582, PubMed:7550379). Catalyzes the double cyclization reaction which converts neurosporene to 7,8-dihydro-beta-carotene (PubMed:20460582).</text>
</comment>
<comment type="catalytic activity">
    <reaction evidence="3">
        <text>a carotenoid psi-end group = a carotenoid beta-end derivative</text>
        <dbReference type="Rhea" id="RHEA:55620"/>
        <dbReference type="ChEBI" id="CHEBI:139114"/>
        <dbReference type="ChEBI" id="CHEBI:139120"/>
        <dbReference type="EC" id="5.5.1.19"/>
    </reaction>
    <physiologicalReaction direction="left-to-right" evidence="3">
        <dbReference type="Rhea" id="RHEA:55621"/>
    </physiologicalReaction>
</comment>
<comment type="catalytic activity">
    <reaction evidence="2">
        <text>all-trans-lycopene = gamma-carotene</text>
        <dbReference type="Rhea" id="RHEA:32219"/>
        <dbReference type="ChEBI" id="CHEBI:15948"/>
        <dbReference type="ChEBI" id="CHEBI:27740"/>
    </reaction>
    <physiologicalReaction direction="left-to-right" evidence="2">
        <dbReference type="Rhea" id="RHEA:32220"/>
    </physiologicalReaction>
</comment>
<comment type="catalytic activity">
    <reaction evidence="2">
        <text>gamma-carotene = all-trans-beta-carotene</text>
        <dbReference type="Rhea" id="RHEA:32239"/>
        <dbReference type="ChEBI" id="CHEBI:17579"/>
        <dbReference type="ChEBI" id="CHEBI:27740"/>
    </reaction>
    <physiologicalReaction direction="left-to-right" evidence="2">
        <dbReference type="Rhea" id="RHEA:32240"/>
    </physiologicalReaction>
</comment>
<comment type="catalytic activity">
    <reaction evidence="2">
        <text>all-trans-neurosporene = beta-zeacarotene</text>
        <dbReference type="Rhea" id="RHEA:67976"/>
        <dbReference type="ChEBI" id="CHEBI:16833"/>
        <dbReference type="ChEBI" id="CHEBI:27533"/>
    </reaction>
    <physiologicalReaction direction="left-to-right" evidence="2">
        <dbReference type="Rhea" id="RHEA:67977"/>
    </physiologicalReaction>
</comment>
<comment type="catalytic activity">
    <reaction evidence="2">
        <text>beta-zeacarotene = 7,8-dihydro-beta-carotene</text>
        <dbReference type="Rhea" id="RHEA:67980"/>
        <dbReference type="ChEBI" id="CHEBI:27533"/>
        <dbReference type="ChEBI" id="CHEBI:80427"/>
    </reaction>
    <physiologicalReaction direction="left-to-right" evidence="2">
        <dbReference type="Rhea" id="RHEA:67981"/>
    </physiologicalReaction>
</comment>
<comment type="cofactor">
    <cofactor evidence="2">
        <name>FAD</name>
        <dbReference type="ChEBI" id="CHEBI:57692"/>
    </cofactor>
    <text evidence="2">Binds 1 FAD per subunit non-covalently.</text>
</comment>
<comment type="cofactor">
    <cofactor evidence="2">
        <name>NADPH</name>
        <dbReference type="ChEBI" id="CHEBI:57783"/>
    </cofactor>
</comment>
<comment type="biophysicochemical properties">
    <kinetics>
        <KM evidence="2">0.22 mM for NADPH</KM>
    </kinetics>
</comment>
<comment type="pathway">
    <text evidence="5">Carotenoid biosynthesis; beta-carotene biosynthesis.</text>
</comment>
<comment type="pathway">
    <text evidence="5">Carotenoid biosynthesis; beta-zeacarotene biosynthesis.</text>
</comment>
<comment type="subunit">
    <text evidence="6">Monomer.</text>
</comment>
<comment type="subcellular location">
    <subcellularLocation>
        <location evidence="1">Plastid</location>
        <location evidence="1">Chloroplast</location>
    </subcellularLocation>
    <subcellularLocation>
        <location evidence="7">Plastid</location>
        <location evidence="7">Chromoplast</location>
    </subcellularLocation>
</comment>
<comment type="similarity">
    <text evidence="5">Belongs to the lycopene cyclase family.</text>
</comment>
<gene>
    <name evidence="4" type="primary">LCY1</name>
    <name type="synonym">CRTL</name>
    <name type="ORF">LOC107869983</name>
    <name evidence="8" type="ORF">T459_13595</name>
</gene>